<organism>
    <name type="scientific">Shewanella piezotolerans (strain WP3 / JCM 13877)</name>
    <dbReference type="NCBI Taxonomy" id="225849"/>
    <lineage>
        <taxon>Bacteria</taxon>
        <taxon>Pseudomonadati</taxon>
        <taxon>Pseudomonadota</taxon>
        <taxon>Gammaproteobacteria</taxon>
        <taxon>Alteromonadales</taxon>
        <taxon>Shewanellaceae</taxon>
        <taxon>Shewanella</taxon>
    </lineage>
</organism>
<gene>
    <name type="ordered locus">swp_1285</name>
</gene>
<reference key="1">
    <citation type="journal article" date="2008" name="PLoS ONE">
        <title>Environmental adaptation: genomic analysis of the piezotolerant and psychrotolerant deep-sea iron reducing bacterium Shewanella piezotolerans WP3.</title>
        <authorList>
            <person name="Wang F."/>
            <person name="Wang J."/>
            <person name="Jian H."/>
            <person name="Zhang B."/>
            <person name="Li S."/>
            <person name="Wang F."/>
            <person name="Zeng X."/>
            <person name="Gao L."/>
            <person name="Bartlett D.H."/>
            <person name="Yu J."/>
            <person name="Hu S."/>
            <person name="Xiao X."/>
        </authorList>
    </citation>
    <scope>NUCLEOTIDE SEQUENCE [LARGE SCALE GENOMIC DNA]</scope>
    <source>
        <strain>WP3 / JCM 13877</strain>
    </source>
</reference>
<accession>B8CJH9</accession>
<sequence length="152" mass="16722">MKVWVDADACPGVTKETLFRAADRAEIETILIANHSVRIPPSRFIKMVTVSSGFDVADDEIVKRLTAGDLVITADIPLAAEVIEKGGLALNPRGELYTEQNIKSILNMRDFMDTMRASGVQTGGPAAMSQSERQAFANQLDRLITKFKQQKK</sequence>
<name>Y1285_SHEPW</name>
<feature type="chain" id="PRO_1000126214" description="UPF0178 protein swp_1285">
    <location>
        <begin position="1"/>
        <end position="152"/>
    </location>
</feature>
<protein>
    <recommendedName>
        <fullName evidence="1">UPF0178 protein swp_1285</fullName>
    </recommendedName>
</protein>
<evidence type="ECO:0000255" key="1">
    <source>
        <dbReference type="HAMAP-Rule" id="MF_00489"/>
    </source>
</evidence>
<dbReference type="EMBL" id="CP000472">
    <property type="protein sequence ID" value="ACJ28076.1"/>
    <property type="molecule type" value="Genomic_DNA"/>
</dbReference>
<dbReference type="RefSeq" id="WP_020911454.1">
    <property type="nucleotide sequence ID" value="NC_011566.1"/>
</dbReference>
<dbReference type="STRING" id="225849.swp_1285"/>
<dbReference type="KEGG" id="swp:swp_1285"/>
<dbReference type="eggNOG" id="COG1671">
    <property type="taxonomic scope" value="Bacteria"/>
</dbReference>
<dbReference type="HOGENOM" id="CLU_106619_2_1_6"/>
<dbReference type="OrthoDB" id="9798918at2"/>
<dbReference type="Proteomes" id="UP000000753">
    <property type="component" value="Chromosome"/>
</dbReference>
<dbReference type="CDD" id="cd18720">
    <property type="entry name" value="PIN_YqxD-like"/>
    <property type="match status" value="1"/>
</dbReference>
<dbReference type="HAMAP" id="MF_00489">
    <property type="entry name" value="UPF0178"/>
    <property type="match status" value="1"/>
</dbReference>
<dbReference type="InterPro" id="IPR003791">
    <property type="entry name" value="UPF0178"/>
</dbReference>
<dbReference type="NCBIfam" id="NF001095">
    <property type="entry name" value="PRK00124.1"/>
    <property type="match status" value="1"/>
</dbReference>
<dbReference type="PANTHER" id="PTHR35146">
    <property type="entry name" value="UPF0178 PROTEIN YAII"/>
    <property type="match status" value="1"/>
</dbReference>
<dbReference type="PANTHER" id="PTHR35146:SF1">
    <property type="entry name" value="UPF0178 PROTEIN YAII"/>
    <property type="match status" value="1"/>
</dbReference>
<dbReference type="Pfam" id="PF02639">
    <property type="entry name" value="DUF188"/>
    <property type="match status" value="1"/>
</dbReference>
<proteinExistence type="inferred from homology"/>
<comment type="similarity">
    <text evidence="1">Belongs to the UPF0178 family.</text>
</comment>